<accession>Q1BHB3</accession>
<evidence type="ECO:0000255" key="1">
    <source>
        <dbReference type="HAMAP-Rule" id="MF_00115"/>
    </source>
</evidence>
<organism>
    <name type="scientific">Burkholderia orbicola (strain AU 1054)</name>
    <dbReference type="NCBI Taxonomy" id="331271"/>
    <lineage>
        <taxon>Bacteria</taxon>
        <taxon>Pseudomonadati</taxon>
        <taxon>Pseudomonadota</taxon>
        <taxon>Betaproteobacteria</taxon>
        <taxon>Burkholderiales</taxon>
        <taxon>Burkholderiaceae</taxon>
        <taxon>Burkholderia</taxon>
        <taxon>Burkholderia cepacia complex</taxon>
        <taxon>Burkholderia orbicola</taxon>
    </lineage>
</organism>
<name>MSCL_BURO1</name>
<keyword id="KW-0997">Cell inner membrane</keyword>
<keyword id="KW-1003">Cell membrane</keyword>
<keyword id="KW-0407">Ion channel</keyword>
<keyword id="KW-0406">Ion transport</keyword>
<keyword id="KW-0472">Membrane</keyword>
<keyword id="KW-0812">Transmembrane</keyword>
<keyword id="KW-1133">Transmembrane helix</keyword>
<keyword id="KW-0813">Transport</keyword>
<sequence>MSIIKEFKEFAVKGNVMDLAVGVIIGGAFSKIVDSVVKDLIMPVIGVLTGGLDFSNKFVLLGTIPPSFKGNPDSFKDLQAAGVAAFGYGSFITVAINFVILAFIIFLMVKFINKLRKPEEAAPAATPEDVVLLREIRDSLKQR</sequence>
<feature type="chain" id="PRO_1000015357" description="Large-conductance mechanosensitive channel">
    <location>
        <begin position="1"/>
        <end position="143"/>
    </location>
</feature>
<feature type="transmembrane region" description="Helical" evidence="1">
    <location>
        <begin position="10"/>
        <end position="30"/>
    </location>
</feature>
<feature type="transmembrane region" description="Helical" evidence="1">
    <location>
        <begin position="89"/>
        <end position="109"/>
    </location>
</feature>
<protein>
    <recommendedName>
        <fullName evidence="1">Large-conductance mechanosensitive channel</fullName>
    </recommendedName>
</protein>
<comment type="function">
    <text evidence="1">Channel that opens in response to stretch forces in the membrane lipid bilayer. May participate in the regulation of osmotic pressure changes within the cell.</text>
</comment>
<comment type="subunit">
    <text evidence="1">Homopentamer.</text>
</comment>
<comment type="subcellular location">
    <subcellularLocation>
        <location evidence="1">Cell inner membrane</location>
        <topology evidence="1">Multi-pass membrane protein</topology>
    </subcellularLocation>
</comment>
<comment type="similarity">
    <text evidence="1">Belongs to the MscL family.</text>
</comment>
<dbReference type="EMBL" id="CP000380">
    <property type="protein sequence ID" value="ABF80992.1"/>
    <property type="molecule type" value="Genomic_DNA"/>
</dbReference>
<dbReference type="HOGENOM" id="CLU_095787_0_1_4"/>
<dbReference type="GO" id="GO:0005886">
    <property type="term" value="C:plasma membrane"/>
    <property type="evidence" value="ECO:0007669"/>
    <property type="project" value="UniProtKB-SubCell"/>
</dbReference>
<dbReference type="GO" id="GO:0008381">
    <property type="term" value="F:mechanosensitive monoatomic ion channel activity"/>
    <property type="evidence" value="ECO:0007669"/>
    <property type="project" value="UniProtKB-UniRule"/>
</dbReference>
<dbReference type="Gene3D" id="1.10.1200.120">
    <property type="entry name" value="Large-conductance mechanosensitive channel, MscL, domain 1"/>
    <property type="match status" value="1"/>
</dbReference>
<dbReference type="HAMAP" id="MF_00115">
    <property type="entry name" value="MscL"/>
    <property type="match status" value="1"/>
</dbReference>
<dbReference type="InterPro" id="IPR019823">
    <property type="entry name" value="Mechanosensitive_channel_CS"/>
</dbReference>
<dbReference type="InterPro" id="IPR001185">
    <property type="entry name" value="MS_channel"/>
</dbReference>
<dbReference type="InterPro" id="IPR037673">
    <property type="entry name" value="MSC/AndL"/>
</dbReference>
<dbReference type="InterPro" id="IPR036019">
    <property type="entry name" value="MscL_channel"/>
</dbReference>
<dbReference type="NCBIfam" id="TIGR00220">
    <property type="entry name" value="mscL"/>
    <property type="match status" value="1"/>
</dbReference>
<dbReference type="NCBIfam" id="NF001843">
    <property type="entry name" value="PRK00567.1-4"/>
    <property type="match status" value="1"/>
</dbReference>
<dbReference type="NCBIfam" id="NF010557">
    <property type="entry name" value="PRK13952.1"/>
    <property type="match status" value="1"/>
</dbReference>
<dbReference type="PANTHER" id="PTHR30266:SF2">
    <property type="entry name" value="LARGE-CONDUCTANCE MECHANOSENSITIVE CHANNEL"/>
    <property type="match status" value="1"/>
</dbReference>
<dbReference type="PANTHER" id="PTHR30266">
    <property type="entry name" value="MECHANOSENSITIVE CHANNEL MSCL"/>
    <property type="match status" value="1"/>
</dbReference>
<dbReference type="Pfam" id="PF01741">
    <property type="entry name" value="MscL"/>
    <property type="match status" value="1"/>
</dbReference>
<dbReference type="PRINTS" id="PR01264">
    <property type="entry name" value="MECHCHANNEL"/>
</dbReference>
<dbReference type="SUPFAM" id="SSF81330">
    <property type="entry name" value="Gated mechanosensitive channel"/>
    <property type="match status" value="1"/>
</dbReference>
<dbReference type="PROSITE" id="PS01327">
    <property type="entry name" value="MSCL"/>
    <property type="match status" value="1"/>
</dbReference>
<proteinExistence type="inferred from homology"/>
<reference key="1">
    <citation type="submission" date="2006-05" db="EMBL/GenBank/DDBJ databases">
        <title>Complete sequence of chromosome 3 of Burkholderia cenocepacia AU 1054.</title>
        <authorList>
            <consortium name="US DOE Joint Genome Institute"/>
            <person name="Copeland A."/>
            <person name="Lucas S."/>
            <person name="Lapidus A."/>
            <person name="Barry K."/>
            <person name="Detter J.C."/>
            <person name="Glavina del Rio T."/>
            <person name="Hammon N."/>
            <person name="Israni S."/>
            <person name="Dalin E."/>
            <person name="Tice H."/>
            <person name="Pitluck S."/>
            <person name="Chain P."/>
            <person name="Malfatti S."/>
            <person name="Shin M."/>
            <person name="Vergez L."/>
            <person name="Schmutz J."/>
            <person name="Larimer F."/>
            <person name="Land M."/>
            <person name="Hauser L."/>
            <person name="Kyrpides N."/>
            <person name="Lykidis A."/>
            <person name="LiPuma J.J."/>
            <person name="Konstantinidis K."/>
            <person name="Tiedje J.M."/>
            <person name="Richardson P."/>
        </authorList>
    </citation>
    <scope>NUCLEOTIDE SEQUENCE [LARGE SCALE GENOMIC DNA]</scope>
    <source>
        <strain>AU 1054</strain>
    </source>
</reference>
<gene>
    <name evidence="1" type="primary">mscL</name>
    <name type="ordered locus">Bcen_6128</name>
</gene>